<sequence>MRVAEVVRNTSETQIRVKLDLDGTGRQKLATGVPFLDHMLDQIARHGLVDLEVEAHGDTHIDDHHTVEDVGITLGQAVAKAIGDRKGIRRYGHSYVPLDEALSRVVIDFSGRPGLEFHVPFTRARIGTFDVDLSIEFFRGFVNHAGVTLHIDNLRGINAHHQLETVFKAFGRALRAAVELDERAAGQIPSTKGSL</sequence>
<accession>Q1BS27</accession>
<protein>
    <recommendedName>
        <fullName evidence="1">Imidazoleglycerol-phosphate dehydratase</fullName>
        <shortName evidence="1">IGPD</shortName>
        <ecNumber evidence="1">4.2.1.19</ecNumber>
    </recommendedName>
</protein>
<gene>
    <name evidence="1" type="primary">hisB</name>
    <name type="ordered locus">Bcen_2680</name>
</gene>
<comment type="catalytic activity">
    <reaction evidence="1">
        <text>D-erythro-1-(imidazol-4-yl)glycerol 3-phosphate = 3-(imidazol-4-yl)-2-oxopropyl phosphate + H2O</text>
        <dbReference type="Rhea" id="RHEA:11040"/>
        <dbReference type="ChEBI" id="CHEBI:15377"/>
        <dbReference type="ChEBI" id="CHEBI:57766"/>
        <dbReference type="ChEBI" id="CHEBI:58278"/>
        <dbReference type="EC" id="4.2.1.19"/>
    </reaction>
</comment>
<comment type="pathway">
    <text evidence="1">Amino-acid biosynthesis; L-histidine biosynthesis; L-histidine from 5-phospho-alpha-D-ribose 1-diphosphate: step 6/9.</text>
</comment>
<comment type="subcellular location">
    <subcellularLocation>
        <location evidence="1">Cytoplasm</location>
    </subcellularLocation>
</comment>
<comment type="similarity">
    <text evidence="1">Belongs to the imidazoleglycerol-phosphate dehydratase family.</text>
</comment>
<keyword id="KW-0028">Amino-acid biosynthesis</keyword>
<keyword id="KW-0963">Cytoplasm</keyword>
<keyword id="KW-0368">Histidine biosynthesis</keyword>
<keyword id="KW-0456">Lyase</keyword>
<reference key="1">
    <citation type="submission" date="2006-05" db="EMBL/GenBank/DDBJ databases">
        <title>Complete sequence of chromosome 1 of Burkholderia cenocepacia AU 1054.</title>
        <authorList>
            <consortium name="US DOE Joint Genome Institute"/>
            <person name="Copeland A."/>
            <person name="Lucas S."/>
            <person name="Lapidus A."/>
            <person name="Barry K."/>
            <person name="Detter J.C."/>
            <person name="Glavina del Rio T."/>
            <person name="Hammon N."/>
            <person name="Israni S."/>
            <person name="Dalin E."/>
            <person name="Tice H."/>
            <person name="Pitluck S."/>
            <person name="Chain P."/>
            <person name="Malfatti S."/>
            <person name="Shin M."/>
            <person name="Vergez L."/>
            <person name="Schmutz J."/>
            <person name="Larimer F."/>
            <person name="Land M."/>
            <person name="Hauser L."/>
            <person name="Kyrpides N."/>
            <person name="Lykidis A."/>
            <person name="LiPuma J.J."/>
            <person name="Konstantinidis K."/>
            <person name="Tiedje J.M."/>
            <person name="Richardson P."/>
        </authorList>
    </citation>
    <scope>NUCLEOTIDE SEQUENCE [LARGE SCALE GENOMIC DNA]</scope>
    <source>
        <strain>AU 1054</strain>
    </source>
</reference>
<name>HIS7_BURO1</name>
<organism>
    <name type="scientific">Burkholderia orbicola (strain AU 1054)</name>
    <dbReference type="NCBI Taxonomy" id="331271"/>
    <lineage>
        <taxon>Bacteria</taxon>
        <taxon>Pseudomonadati</taxon>
        <taxon>Pseudomonadota</taxon>
        <taxon>Betaproteobacteria</taxon>
        <taxon>Burkholderiales</taxon>
        <taxon>Burkholderiaceae</taxon>
        <taxon>Burkholderia</taxon>
        <taxon>Burkholderia cepacia complex</taxon>
        <taxon>Burkholderia orbicola</taxon>
    </lineage>
</organism>
<dbReference type="EC" id="4.2.1.19" evidence="1"/>
<dbReference type="EMBL" id="CP000378">
    <property type="protein sequence ID" value="ABF77578.1"/>
    <property type="molecule type" value="Genomic_DNA"/>
</dbReference>
<dbReference type="SMR" id="Q1BS27"/>
<dbReference type="HOGENOM" id="CLU_044308_2_0_4"/>
<dbReference type="UniPathway" id="UPA00031">
    <property type="reaction ID" value="UER00011"/>
</dbReference>
<dbReference type="GO" id="GO:0005737">
    <property type="term" value="C:cytoplasm"/>
    <property type="evidence" value="ECO:0007669"/>
    <property type="project" value="UniProtKB-SubCell"/>
</dbReference>
<dbReference type="GO" id="GO:0004424">
    <property type="term" value="F:imidazoleglycerol-phosphate dehydratase activity"/>
    <property type="evidence" value="ECO:0007669"/>
    <property type="project" value="UniProtKB-UniRule"/>
</dbReference>
<dbReference type="GO" id="GO:0000105">
    <property type="term" value="P:L-histidine biosynthetic process"/>
    <property type="evidence" value="ECO:0007669"/>
    <property type="project" value="UniProtKB-UniRule"/>
</dbReference>
<dbReference type="CDD" id="cd07914">
    <property type="entry name" value="IGPD"/>
    <property type="match status" value="1"/>
</dbReference>
<dbReference type="FunFam" id="3.30.230.40:FF:000002">
    <property type="entry name" value="Imidazoleglycerol-phosphate dehydratase"/>
    <property type="match status" value="1"/>
</dbReference>
<dbReference type="FunFam" id="3.30.230.40:FF:000003">
    <property type="entry name" value="Imidazoleglycerol-phosphate dehydratase HisB"/>
    <property type="match status" value="1"/>
</dbReference>
<dbReference type="Gene3D" id="3.30.230.40">
    <property type="entry name" value="Imidazole glycerol phosphate dehydratase, domain 1"/>
    <property type="match status" value="2"/>
</dbReference>
<dbReference type="HAMAP" id="MF_00076">
    <property type="entry name" value="HisB"/>
    <property type="match status" value="1"/>
</dbReference>
<dbReference type="InterPro" id="IPR038494">
    <property type="entry name" value="IGPD_sf"/>
</dbReference>
<dbReference type="InterPro" id="IPR000807">
    <property type="entry name" value="ImidazoleglycerolP_deHydtase"/>
</dbReference>
<dbReference type="InterPro" id="IPR020565">
    <property type="entry name" value="ImidazoleglycerP_deHydtase_CS"/>
</dbReference>
<dbReference type="InterPro" id="IPR020568">
    <property type="entry name" value="Ribosomal_Su5_D2-typ_SF"/>
</dbReference>
<dbReference type="NCBIfam" id="NF002106">
    <property type="entry name" value="PRK00951.1-1"/>
    <property type="match status" value="1"/>
</dbReference>
<dbReference type="NCBIfam" id="NF002109">
    <property type="entry name" value="PRK00951.1-5"/>
    <property type="match status" value="1"/>
</dbReference>
<dbReference type="NCBIfam" id="NF002111">
    <property type="entry name" value="PRK00951.2-1"/>
    <property type="match status" value="1"/>
</dbReference>
<dbReference type="NCBIfam" id="NF002114">
    <property type="entry name" value="PRK00951.2-4"/>
    <property type="match status" value="1"/>
</dbReference>
<dbReference type="PANTHER" id="PTHR23133:SF2">
    <property type="entry name" value="IMIDAZOLEGLYCEROL-PHOSPHATE DEHYDRATASE"/>
    <property type="match status" value="1"/>
</dbReference>
<dbReference type="PANTHER" id="PTHR23133">
    <property type="entry name" value="IMIDAZOLEGLYCEROL-PHOSPHATE DEHYDRATASE HIS7"/>
    <property type="match status" value="1"/>
</dbReference>
<dbReference type="Pfam" id="PF00475">
    <property type="entry name" value="IGPD"/>
    <property type="match status" value="1"/>
</dbReference>
<dbReference type="SUPFAM" id="SSF54211">
    <property type="entry name" value="Ribosomal protein S5 domain 2-like"/>
    <property type="match status" value="2"/>
</dbReference>
<dbReference type="PROSITE" id="PS00954">
    <property type="entry name" value="IGP_DEHYDRATASE_1"/>
    <property type="match status" value="1"/>
</dbReference>
<dbReference type="PROSITE" id="PS00955">
    <property type="entry name" value="IGP_DEHYDRATASE_2"/>
    <property type="match status" value="1"/>
</dbReference>
<evidence type="ECO:0000255" key="1">
    <source>
        <dbReference type="HAMAP-Rule" id="MF_00076"/>
    </source>
</evidence>
<proteinExistence type="inferred from homology"/>
<feature type="chain" id="PRO_1000010252" description="Imidazoleglycerol-phosphate dehydratase">
    <location>
        <begin position="1"/>
        <end position="195"/>
    </location>
</feature>